<comment type="function">
    <text evidence="1">One of the primary rRNA binding proteins, it binds directly to 16S rRNA where it helps nucleate assembly of the platform of the 30S subunit by binding and bridging several RNA helices of the 16S rRNA.</text>
</comment>
<comment type="function">
    <text evidence="1">Forms an intersubunit bridge (bridge B4) with the 23S rRNA of the 50S subunit in the ribosome.</text>
</comment>
<comment type="subunit">
    <text evidence="1">Part of the 30S ribosomal subunit. Forms a bridge to the 50S subunit in the 70S ribosome, contacting the 23S rRNA.</text>
</comment>
<comment type="similarity">
    <text evidence="1">Belongs to the universal ribosomal protein uS15 family.</text>
</comment>
<name>RS15_ROSDO</name>
<sequence length="89" mass="10241">MSITAEEKARVMKEFATKEGDTGSPEVQVAILSSRIATLTEHFKTHKKDNHGRRGLLKMVATRRKLLDYTKAKDEARYQDLIKRLGLRR</sequence>
<gene>
    <name evidence="1" type="primary">rpsO</name>
    <name type="ordered locus">RD1_0642</name>
</gene>
<accession>Q16CF2</accession>
<keyword id="KW-1185">Reference proteome</keyword>
<keyword id="KW-0687">Ribonucleoprotein</keyword>
<keyword id="KW-0689">Ribosomal protein</keyword>
<keyword id="KW-0694">RNA-binding</keyword>
<keyword id="KW-0699">rRNA-binding</keyword>
<dbReference type="EMBL" id="CP000362">
    <property type="protein sequence ID" value="ABG30341.1"/>
    <property type="molecule type" value="Genomic_DNA"/>
</dbReference>
<dbReference type="RefSeq" id="WP_011566963.1">
    <property type="nucleotide sequence ID" value="NC_008209.1"/>
</dbReference>
<dbReference type="SMR" id="Q16CF2"/>
<dbReference type="STRING" id="375451.RD1_0642"/>
<dbReference type="KEGG" id="rde:RD1_0642"/>
<dbReference type="eggNOG" id="COG0184">
    <property type="taxonomic scope" value="Bacteria"/>
</dbReference>
<dbReference type="HOGENOM" id="CLU_148518_0_0_5"/>
<dbReference type="OrthoDB" id="9799262at2"/>
<dbReference type="Proteomes" id="UP000007029">
    <property type="component" value="Chromosome"/>
</dbReference>
<dbReference type="GO" id="GO:0022627">
    <property type="term" value="C:cytosolic small ribosomal subunit"/>
    <property type="evidence" value="ECO:0007669"/>
    <property type="project" value="TreeGrafter"/>
</dbReference>
<dbReference type="GO" id="GO:0019843">
    <property type="term" value="F:rRNA binding"/>
    <property type="evidence" value="ECO:0007669"/>
    <property type="project" value="UniProtKB-UniRule"/>
</dbReference>
<dbReference type="GO" id="GO:0003735">
    <property type="term" value="F:structural constituent of ribosome"/>
    <property type="evidence" value="ECO:0007669"/>
    <property type="project" value="InterPro"/>
</dbReference>
<dbReference type="GO" id="GO:0006412">
    <property type="term" value="P:translation"/>
    <property type="evidence" value="ECO:0007669"/>
    <property type="project" value="UniProtKB-UniRule"/>
</dbReference>
<dbReference type="CDD" id="cd00353">
    <property type="entry name" value="Ribosomal_S15p_S13e"/>
    <property type="match status" value="1"/>
</dbReference>
<dbReference type="FunFam" id="1.10.287.10:FF:000002">
    <property type="entry name" value="30S ribosomal protein S15"/>
    <property type="match status" value="1"/>
</dbReference>
<dbReference type="Gene3D" id="6.10.250.3130">
    <property type="match status" value="1"/>
</dbReference>
<dbReference type="Gene3D" id="1.10.287.10">
    <property type="entry name" value="S15/NS1, RNA-binding"/>
    <property type="match status" value="1"/>
</dbReference>
<dbReference type="HAMAP" id="MF_01343_B">
    <property type="entry name" value="Ribosomal_uS15_B"/>
    <property type="match status" value="1"/>
</dbReference>
<dbReference type="InterPro" id="IPR000589">
    <property type="entry name" value="Ribosomal_uS15"/>
</dbReference>
<dbReference type="InterPro" id="IPR005290">
    <property type="entry name" value="Ribosomal_uS15_bac-type"/>
</dbReference>
<dbReference type="InterPro" id="IPR009068">
    <property type="entry name" value="uS15_NS1_RNA-bd_sf"/>
</dbReference>
<dbReference type="NCBIfam" id="TIGR00952">
    <property type="entry name" value="S15_bact"/>
    <property type="match status" value="1"/>
</dbReference>
<dbReference type="PANTHER" id="PTHR23321">
    <property type="entry name" value="RIBOSOMAL PROTEIN S15, BACTERIAL AND ORGANELLAR"/>
    <property type="match status" value="1"/>
</dbReference>
<dbReference type="PANTHER" id="PTHR23321:SF26">
    <property type="entry name" value="SMALL RIBOSOMAL SUBUNIT PROTEIN US15M"/>
    <property type="match status" value="1"/>
</dbReference>
<dbReference type="Pfam" id="PF00312">
    <property type="entry name" value="Ribosomal_S15"/>
    <property type="match status" value="1"/>
</dbReference>
<dbReference type="SMART" id="SM01387">
    <property type="entry name" value="Ribosomal_S15"/>
    <property type="match status" value="1"/>
</dbReference>
<dbReference type="SUPFAM" id="SSF47060">
    <property type="entry name" value="S15/NS1 RNA-binding domain"/>
    <property type="match status" value="1"/>
</dbReference>
<dbReference type="PROSITE" id="PS00362">
    <property type="entry name" value="RIBOSOMAL_S15"/>
    <property type="match status" value="1"/>
</dbReference>
<evidence type="ECO:0000255" key="1">
    <source>
        <dbReference type="HAMAP-Rule" id="MF_01343"/>
    </source>
</evidence>
<evidence type="ECO:0000305" key="2"/>
<feature type="chain" id="PRO_0000255526" description="Small ribosomal subunit protein uS15">
    <location>
        <begin position="1"/>
        <end position="89"/>
    </location>
</feature>
<protein>
    <recommendedName>
        <fullName evidence="1">Small ribosomal subunit protein uS15</fullName>
    </recommendedName>
    <alternativeName>
        <fullName evidence="2">30S ribosomal protein S15</fullName>
    </alternativeName>
</protein>
<organism>
    <name type="scientific">Roseobacter denitrificans (strain ATCC 33942 / OCh 114)</name>
    <name type="common">Erythrobacter sp. (strain OCh 114)</name>
    <name type="synonym">Roseobacter denitrificans</name>
    <dbReference type="NCBI Taxonomy" id="375451"/>
    <lineage>
        <taxon>Bacteria</taxon>
        <taxon>Pseudomonadati</taxon>
        <taxon>Pseudomonadota</taxon>
        <taxon>Alphaproteobacteria</taxon>
        <taxon>Rhodobacterales</taxon>
        <taxon>Roseobacteraceae</taxon>
        <taxon>Roseobacter</taxon>
    </lineage>
</organism>
<proteinExistence type="inferred from homology"/>
<reference key="1">
    <citation type="journal article" date="2007" name="J. Bacteriol.">
        <title>The complete genome sequence of Roseobacter denitrificans reveals a mixotrophic rather than photosynthetic metabolism.</title>
        <authorList>
            <person name="Swingley W.D."/>
            <person name="Sadekar S."/>
            <person name="Mastrian S.D."/>
            <person name="Matthies H.J."/>
            <person name="Hao J."/>
            <person name="Ramos H."/>
            <person name="Acharya C.R."/>
            <person name="Conrad A.L."/>
            <person name="Taylor H.L."/>
            <person name="Dejesa L.C."/>
            <person name="Shah M.K."/>
            <person name="O'Huallachain M.E."/>
            <person name="Lince M.T."/>
            <person name="Blankenship R.E."/>
            <person name="Beatty J.T."/>
            <person name="Touchman J.W."/>
        </authorList>
    </citation>
    <scope>NUCLEOTIDE SEQUENCE [LARGE SCALE GENOMIC DNA]</scope>
    <source>
        <strain>ATCC 33942 / OCh 114</strain>
    </source>
</reference>